<accession>Q9QX01</accession>
<evidence type="ECO:0000250" key="1">
    <source>
        <dbReference type="UniProtKB" id="P48995"/>
    </source>
</evidence>
<evidence type="ECO:0000250" key="2">
    <source>
        <dbReference type="UniProtKB" id="Q61056"/>
    </source>
</evidence>
<evidence type="ECO:0000256" key="3">
    <source>
        <dbReference type="SAM" id="MobiDB-lite"/>
    </source>
</evidence>
<evidence type="ECO:0000269" key="4">
    <source>
    </source>
</evidence>
<evidence type="ECO:0000305" key="5"/>
<comment type="function">
    <text evidence="1">Forms a receptor-activated non-selective calcium permeant cation channel. Forms a heteromeric ion channel with TRPC4 or TRPC5 that has reduced calcium permeability compared to the homomeric TRPC4 or TRPC5 channel (By similarity). Also permeable to monovalent ions including sodium, lithium and cesium ions (By similarity).</text>
</comment>
<comment type="catalytic activity">
    <reaction evidence="1">
        <text>Ca(2+)(in) = Ca(2+)(out)</text>
        <dbReference type="Rhea" id="RHEA:29671"/>
        <dbReference type="ChEBI" id="CHEBI:29108"/>
    </reaction>
</comment>
<comment type="catalytic activity">
    <reaction evidence="1">
        <text>Na(+)(in) = Na(+)(out)</text>
        <dbReference type="Rhea" id="RHEA:34963"/>
        <dbReference type="ChEBI" id="CHEBI:29101"/>
    </reaction>
</comment>
<comment type="catalytic activity">
    <reaction evidence="1">
        <text>Li(+)(in) = Li(+)(out)</text>
        <dbReference type="Rhea" id="RHEA:78551"/>
        <dbReference type="ChEBI" id="CHEBI:49713"/>
    </reaction>
</comment>
<comment type="catalytic activity">
    <reaction evidence="1">
        <text>Cs(+)(in) = Cs(+)(out)</text>
        <dbReference type="Rhea" id="RHEA:78555"/>
        <dbReference type="ChEBI" id="CHEBI:49547"/>
    </reaction>
</comment>
<comment type="activity regulation">
    <text evidence="1">May be operated by a phosphatidylinositol second messenger system activated by receptor tyrosine kinases or G-protein coupled receptors (By similarity). Also activated by intracellular calcium store depletion (By similarity).</text>
</comment>
<comment type="subunit">
    <text evidence="1 2 4">Heterotetramer with TRPC4 and/or TRPC5 (PubMed:11301024). Forms a heteromeric ion channel with TRPC4, with a 1:3 TRPC1:TRPC4 stoichiometry (By similarity). Unlike other TRP channel proteins, does not form a homomeric channel (By similarity). Interacts with TRPC4AP (By similarity). Interacts with ITPR3 (By similarity). Interacts with MX1 and RNF24 (By similarity). Interacts with FKBP4 (By similarity). Interacts with PLSCR1 (By similarity). Interacts with PKD2L2 (By similarity). Forms a heterotetramer with PKD2 with a 2:2 stoichiometry; has distinct channel properties separate from PKD2 or TRPC1 homomers alone (By similarity).</text>
</comment>
<comment type="subcellular location">
    <subcellularLocation>
        <location evidence="1">Cell membrane</location>
        <topology evidence="1">Multi-pass membrane protein</topology>
    </subcellularLocation>
</comment>
<comment type="alternative products">
    <event type="alternative splicing"/>
    <isoform>
        <id>Q9QX01-1</id>
        <name>Beta</name>
        <sequence type="displayed"/>
    </isoform>
    <isoform>
        <id>Q9QX01-2</id>
        <name>Alpha</name>
        <sequence type="not described"/>
    </isoform>
</comment>
<comment type="tissue specificity">
    <text evidence="4">Expressed in brain, hippocampus, amygdala, Purkinje cells and single neurons in the cortex and striatum.</text>
</comment>
<comment type="PTM">
    <text evidence="1">Activation of PRKCA induces phosphorylation of TRPC1 and subsequent Ca2+ entry into cells.</text>
</comment>
<comment type="similarity">
    <text evidence="5">Belongs to the transient receptor (TC 1.A.4) family. STrpC subfamily. TRPC1 sub-subfamily.</text>
</comment>
<keyword id="KW-0025">Alternative splicing</keyword>
<keyword id="KW-0040">ANK repeat</keyword>
<keyword id="KW-0106">Calcium</keyword>
<keyword id="KW-0107">Calcium channel</keyword>
<keyword id="KW-0109">Calcium transport</keyword>
<keyword id="KW-1003">Cell membrane</keyword>
<keyword id="KW-1015">Disulfide bond</keyword>
<keyword id="KW-0407">Ion channel</keyword>
<keyword id="KW-0406">Ion transport</keyword>
<keyword id="KW-0472">Membrane</keyword>
<keyword id="KW-0479">Metal-binding</keyword>
<keyword id="KW-0597">Phosphoprotein</keyword>
<keyword id="KW-1185">Reference proteome</keyword>
<keyword id="KW-0677">Repeat</keyword>
<keyword id="KW-0812">Transmembrane</keyword>
<keyword id="KW-1133">Transmembrane helix</keyword>
<keyword id="KW-0813">Transport</keyword>
<keyword id="KW-0862">Zinc</keyword>
<sequence>MMAALYPSTDLSGVSSSSLPSSPSSSSPNEVMALKDVREVKEENTLNEKLFLLACDKGDYYMVKKILEENSSGDLNINCVDVLGRNAVTITIENESLDILQLLLDYGCQKLMERIQNPEYSTTMDVAPVILAAHRNNYEILTMLLKQDVALPKPHAVGCECTLCSAKNKKDSLRHSRFRLDIYRCLASPALIMLTEEDPILRAFELSADLKELSLVEVEFWNDYEELARQCKMFAKDLLAQARNSRELEVILNHTSSDEPLDKRGLLEERMNLSRLKLAIKYNQKEFVSQSNCQQFLNTVWFGQMSGYRRKPTCKKIMTVLTVGIFWPVLSLCYLIAPKSQFGRIIHTPFMKFIIHGASYFTFLLLLNLYSLVYNEDKKNTMGPALERIDYLLILWIIGMIWSDIKRLWYEGLEDFLEESRNQLSFVMNSLYLATFALKVVAHNKFHDFADRKDWDAFHPTLVAEGLFAFANVLSYLRLFFMYTTSSILGPLQISMGQMLQDFGKFLGMFLLVLFSFTIGLTQLYDKGYTSKEQKDCVGIFCEQQSNDTFHSFIGTCFALFWYIFSLAHVAIFVTRFSYGEELQSFVGAVIVGTYNVVVVIVLTKLLVAMLHKSFQLIANHEDKEWKFARAKLWLSYFDDKCTLPPPFNIIPSPKTICYMISSLSKWVCSHTSKGKVRRQNSLKEWRNLKQKRDENYQKVMCCLVHRYLTSMRQKMQSTDQATVENLNELRQDLSKFRNEIRDLLGFRTSKYAMFYPKN</sequence>
<reference key="1">
    <citation type="journal article" date="1999" name="Am. J. Physiol.">
        <title>Cloning of Trp1beta isoform from rat brain: immunodetection and localization of the endogenous Trp1 protein.</title>
        <authorList>
            <person name="Wang W."/>
            <person name="O'Connell B."/>
            <person name="Dykeman R."/>
            <person name="Sakai T."/>
            <person name="Delporte C."/>
            <person name="Swaim W."/>
            <person name="Zhu X."/>
            <person name="Birnbaumer L."/>
            <person name="Ambudkar I.S."/>
        </authorList>
    </citation>
    <scope>NUCLEOTIDE SEQUENCE [MRNA]</scope>
    <source>
        <strain>Sprague-Dawley</strain>
        <tissue>Brain</tissue>
    </source>
</reference>
<reference key="2">
    <citation type="journal article" date="2001" name="Neuron">
        <title>TRPC1 and TRPC5 form a novel cation channel in mammalian brain.</title>
        <authorList>
            <person name="Strubing C."/>
            <person name="Krapivinsky G."/>
            <person name="Krapivinsky L."/>
            <person name="Clapham D.E."/>
        </authorList>
    </citation>
    <scope>TISSUE SPECIFICITY</scope>
    <scope>INTERACTION WITH TRPC4 AND TRPC5</scope>
</reference>
<proteinExistence type="evidence at protein level"/>
<protein>
    <recommendedName>
        <fullName>Short transient receptor potential channel 1</fullName>
        <shortName>TrpC1</shortName>
    </recommendedName>
    <alternativeName>
        <fullName>Transient receptor protein 1</fullName>
        <shortName>TRP-1</shortName>
    </alternativeName>
</protein>
<name>TRPC1_RAT</name>
<dbReference type="EMBL" id="AF061266">
    <property type="protein sequence ID" value="AAC67387.1"/>
    <property type="molecule type" value="mRNA"/>
</dbReference>
<dbReference type="RefSeq" id="NP_446010.1">
    <property type="nucleotide sequence ID" value="NM_053558.1"/>
</dbReference>
<dbReference type="SMR" id="Q9QX01"/>
<dbReference type="BioGRID" id="250144">
    <property type="interactions" value="5"/>
</dbReference>
<dbReference type="CORUM" id="Q9QX01"/>
<dbReference type="FunCoup" id="Q9QX01">
    <property type="interactions" value="253"/>
</dbReference>
<dbReference type="STRING" id="10116.ENSRNOP00000074229"/>
<dbReference type="iPTMnet" id="Q9QX01"/>
<dbReference type="PhosphoSitePlus" id="Q9QX01"/>
<dbReference type="PaxDb" id="10116-ENSRNOP00000013144"/>
<dbReference type="ABCD" id="Q9QX01">
    <property type="antibodies" value="1 sequenced antibody"/>
</dbReference>
<dbReference type="GeneID" id="89821"/>
<dbReference type="KEGG" id="rno:89821"/>
<dbReference type="UCSC" id="RGD:619783">
    <molecule id="Q9QX01-1"/>
    <property type="organism name" value="rat"/>
</dbReference>
<dbReference type="AGR" id="RGD:619783"/>
<dbReference type="CTD" id="7220"/>
<dbReference type="RGD" id="619783">
    <property type="gene designation" value="Trpc1"/>
</dbReference>
<dbReference type="eggNOG" id="KOG3609">
    <property type="taxonomic scope" value="Eukaryota"/>
</dbReference>
<dbReference type="InParanoid" id="Q9QX01"/>
<dbReference type="PhylomeDB" id="Q9QX01"/>
<dbReference type="Reactome" id="R-RNO-3295583">
    <property type="pathway name" value="TRP channels"/>
</dbReference>
<dbReference type="Reactome" id="R-RNO-5578775">
    <property type="pathway name" value="Ion homeostasis"/>
</dbReference>
<dbReference type="Reactome" id="R-RNO-983695">
    <property type="pathway name" value="Antigen activates B Cell Receptor (BCR) leading to generation of second messengers"/>
</dbReference>
<dbReference type="PRO" id="PR:Q9QX01"/>
<dbReference type="Proteomes" id="UP000002494">
    <property type="component" value="Unplaced"/>
</dbReference>
<dbReference type="GO" id="GO:0016323">
    <property type="term" value="C:basolateral plasma membrane"/>
    <property type="evidence" value="ECO:0000266"/>
    <property type="project" value="RGD"/>
</dbReference>
<dbReference type="GO" id="GO:0034703">
    <property type="term" value="C:cation channel complex"/>
    <property type="evidence" value="ECO:0000318"/>
    <property type="project" value="GO_Central"/>
</dbReference>
<dbReference type="GO" id="GO:0043034">
    <property type="term" value="C:costamere"/>
    <property type="evidence" value="ECO:0000266"/>
    <property type="project" value="RGD"/>
</dbReference>
<dbReference type="GO" id="GO:0005737">
    <property type="term" value="C:cytoplasm"/>
    <property type="evidence" value="ECO:0000266"/>
    <property type="project" value="RGD"/>
</dbReference>
<dbReference type="GO" id="GO:0045121">
    <property type="term" value="C:membrane raft"/>
    <property type="evidence" value="ECO:0000266"/>
    <property type="project" value="RGD"/>
</dbReference>
<dbReference type="GO" id="GO:0005886">
    <property type="term" value="C:plasma membrane"/>
    <property type="evidence" value="ECO:0000266"/>
    <property type="project" value="RGD"/>
</dbReference>
<dbReference type="GO" id="GO:0045211">
    <property type="term" value="C:postsynaptic membrane"/>
    <property type="evidence" value="ECO:0000314"/>
    <property type="project" value="SynGO"/>
</dbReference>
<dbReference type="GO" id="GO:0042734">
    <property type="term" value="C:presynaptic membrane"/>
    <property type="evidence" value="ECO:0000314"/>
    <property type="project" value="SynGO"/>
</dbReference>
<dbReference type="GO" id="GO:0032991">
    <property type="term" value="C:protein-containing complex"/>
    <property type="evidence" value="ECO:0000266"/>
    <property type="project" value="RGD"/>
</dbReference>
<dbReference type="GO" id="GO:0043235">
    <property type="term" value="C:receptor complex"/>
    <property type="evidence" value="ECO:0000266"/>
    <property type="project" value="RGD"/>
</dbReference>
<dbReference type="GO" id="GO:0030017">
    <property type="term" value="C:sarcomere"/>
    <property type="evidence" value="ECO:0000266"/>
    <property type="project" value="RGD"/>
</dbReference>
<dbReference type="GO" id="GO:0051117">
    <property type="term" value="F:ATPase binding"/>
    <property type="evidence" value="ECO:0000266"/>
    <property type="project" value="RGD"/>
</dbReference>
<dbReference type="GO" id="GO:0070679">
    <property type="term" value="F:inositol 1,4,5 trisphosphate binding"/>
    <property type="evidence" value="ECO:0000266"/>
    <property type="project" value="RGD"/>
</dbReference>
<dbReference type="GO" id="GO:0005261">
    <property type="term" value="F:monoatomic cation channel activity"/>
    <property type="evidence" value="ECO:0000266"/>
    <property type="project" value="RGD"/>
</dbReference>
<dbReference type="GO" id="GO:0005102">
    <property type="term" value="F:signaling receptor binding"/>
    <property type="evidence" value="ECO:0000266"/>
    <property type="project" value="RGD"/>
</dbReference>
<dbReference type="GO" id="GO:0015279">
    <property type="term" value="F:store-operated calcium channel activity"/>
    <property type="evidence" value="ECO:0000250"/>
    <property type="project" value="UniProtKB"/>
</dbReference>
<dbReference type="GO" id="GO:0070588">
    <property type="term" value="P:calcium ion transmembrane transport"/>
    <property type="evidence" value="ECO:0000318"/>
    <property type="project" value="GO_Central"/>
</dbReference>
<dbReference type="GO" id="GO:0071456">
    <property type="term" value="P:cellular response to hypoxia"/>
    <property type="evidence" value="ECO:0000270"/>
    <property type="project" value="RGD"/>
</dbReference>
<dbReference type="GO" id="GO:0042438">
    <property type="term" value="P:melanin biosynthetic process"/>
    <property type="evidence" value="ECO:0000266"/>
    <property type="project" value="RGD"/>
</dbReference>
<dbReference type="GO" id="GO:0050804">
    <property type="term" value="P:modulation of chemical synaptic transmission"/>
    <property type="evidence" value="ECO:0000314"/>
    <property type="project" value="SynGO"/>
</dbReference>
<dbReference type="GO" id="GO:1902632">
    <property type="term" value="P:positive regulation of membrane hyperpolarization"/>
    <property type="evidence" value="ECO:0000266"/>
    <property type="project" value="RGD"/>
</dbReference>
<dbReference type="GO" id="GO:0051281">
    <property type="term" value="P:positive regulation of release of sequestered calcium ion into cytosol"/>
    <property type="evidence" value="ECO:0000266"/>
    <property type="project" value="RGD"/>
</dbReference>
<dbReference type="GO" id="GO:0051480">
    <property type="term" value="P:regulation of cytosolic calcium ion concentration"/>
    <property type="evidence" value="ECO:0000266"/>
    <property type="project" value="RGD"/>
</dbReference>
<dbReference type="GO" id="GO:0060087">
    <property type="term" value="P:relaxation of vascular associated smooth muscle"/>
    <property type="evidence" value="ECO:0000266"/>
    <property type="project" value="RGD"/>
</dbReference>
<dbReference type="GO" id="GO:0051592">
    <property type="term" value="P:response to calcium ion"/>
    <property type="evidence" value="ECO:0000266"/>
    <property type="project" value="RGD"/>
</dbReference>
<dbReference type="GO" id="GO:0046541">
    <property type="term" value="P:saliva secretion"/>
    <property type="evidence" value="ECO:0000266"/>
    <property type="project" value="RGD"/>
</dbReference>
<dbReference type="FunFam" id="1.25.40.20:FF:000088">
    <property type="entry name" value="short transient receptor potential channel 1 isoform X1"/>
    <property type="match status" value="1"/>
</dbReference>
<dbReference type="FunFam" id="1.10.287.70:FF:000266">
    <property type="entry name" value="Transient receptor potential cation channel subfamily c member 1"/>
    <property type="match status" value="1"/>
</dbReference>
<dbReference type="Gene3D" id="1.25.40.20">
    <property type="entry name" value="Ankyrin repeat-containing domain"/>
    <property type="match status" value="1"/>
</dbReference>
<dbReference type="InterPro" id="IPR002110">
    <property type="entry name" value="Ankyrin_rpt"/>
</dbReference>
<dbReference type="InterPro" id="IPR036770">
    <property type="entry name" value="Ankyrin_rpt-contain_sf"/>
</dbReference>
<dbReference type="InterPro" id="IPR005821">
    <property type="entry name" value="Ion_trans_dom"/>
</dbReference>
<dbReference type="InterPro" id="IPR013555">
    <property type="entry name" value="TRP_dom"/>
</dbReference>
<dbReference type="InterPro" id="IPR005457">
    <property type="entry name" value="TRPC1_channel"/>
</dbReference>
<dbReference type="InterPro" id="IPR002153">
    <property type="entry name" value="TRPC_channel"/>
</dbReference>
<dbReference type="NCBIfam" id="TIGR00870">
    <property type="entry name" value="trp"/>
    <property type="match status" value="1"/>
</dbReference>
<dbReference type="PANTHER" id="PTHR10117:SF56">
    <property type="entry name" value="SHORT TRANSIENT RECEPTOR POTENTIAL CHANNEL 1"/>
    <property type="match status" value="1"/>
</dbReference>
<dbReference type="PANTHER" id="PTHR10117">
    <property type="entry name" value="TRANSIENT RECEPTOR POTENTIAL CHANNEL"/>
    <property type="match status" value="1"/>
</dbReference>
<dbReference type="Pfam" id="PF12796">
    <property type="entry name" value="Ank_2"/>
    <property type="match status" value="1"/>
</dbReference>
<dbReference type="Pfam" id="PF00520">
    <property type="entry name" value="Ion_trans"/>
    <property type="match status" value="1"/>
</dbReference>
<dbReference type="Pfam" id="PF08344">
    <property type="entry name" value="TRP_2"/>
    <property type="match status" value="1"/>
</dbReference>
<dbReference type="PRINTS" id="PR01097">
    <property type="entry name" value="TRNSRECEPTRP"/>
</dbReference>
<dbReference type="PRINTS" id="PR01642">
    <property type="entry name" value="TRPCHANNEL1"/>
</dbReference>
<dbReference type="SMART" id="SM00248">
    <property type="entry name" value="ANK"/>
    <property type="match status" value="3"/>
</dbReference>
<dbReference type="SMART" id="SM01420">
    <property type="entry name" value="TRP_2"/>
    <property type="match status" value="1"/>
</dbReference>
<dbReference type="SUPFAM" id="SSF48403">
    <property type="entry name" value="Ankyrin repeat"/>
    <property type="match status" value="1"/>
</dbReference>
<organism>
    <name type="scientific">Rattus norvegicus</name>
    <name type="common">Rat</name>
    <dbReference type="NCBI Taxonomy" id="10116"/>
    <lineage>
        <taxon>Eukaryota</taxon>
        <taxon>Metazoa</taxon>
        <taxon>Chordata</taxon>
        <taxon>Craniata</taxon>
        <taxon>Vertebrata</taxon>
        <taxon>Euteleostomi</taxon>
        <taxon>Mammalia</taxon>
        <taxon>Eutheria</taxon>
        <taxon>Euarchontoglires</taxon>
        <taxon>Glires</taxon>
        <taxon>Rodentia</taxon>
        <taxon>Myomorpha</taxon>
        <taxon>Muroidea</taxon>
        <taxon>Muridae</taxon>
        <taxon>Murinae</taxon>
        <taxon>Rattus</taxon>
    </lineage>
</organism>
<feature type="chain" id="PRO_0000215306" description="Short transient receptor potential channel 1">
    <location>
        <begin position="1"/>
        <end position="759"/>
    </location>
</feature>
<feature type="topological domain" description="Cytoplasmic" evidence="1">
    <location>
        <begin position="1"/>
        <end position="311"/>
    </location>
</feature>
<feature type="intramembrane region" description="Discontinuously helical; Name=Pre-S1" evidence="1">
    <location>
        <begin position="312"/>
        <end position="345"/>
    </location>
</feature>
<feature type="topological domain" description="Cytoplasmic" evidence="1">
    <location>
        <begin position="346"/>
        <end position="352"/>
    </location>
</feature>
<feature type="transmembrane region" description="Helical; Name=S1" evidence="1">
    <location>
        <begin position="353"/>
        <end position="370"/>
    </location>
</feature>
<feature type="topological domain" description="Extracellular" evidence="1">
    <location>
        <begin position="371"/>
        <end position="388"/>
    </location>
</feature>
<feature type="transmembrane region" description="Helical; Name=S2" evidence="1">
    <location>
        <begin position="389"/>
        <end position="405"/>
    </location>
</feature>
<feature type="topological domain" description="Cytoplasmic" evidence="1">
    <location>
        <begin position="406"/>
        <end position="421"/>
    </location>
</feature>
<feature type="transmembrane region" description="Helical; Name=S3" evidence="1">
    <location>
        <begin position="422"/>
        <end position="441"/>
    </location>
</feature>
<feature type="topological domain" description="Extracellular" evidence="1">
    <location>
        <begin position="442"/>
        <end position="462"/>
    </location>
</feature>
<feature type="transmembrane region" description="Helical; Name=S4" evidence="1">
    <location>
        <begin position="463"/>
        <end position="483"/>
    </location>
</feature>
<feature type="topological domain" description="Cytoplasmic" evidence="1">
    <location>
        <begin position="484"/>
        <end position="502"/>
    </location>
</feature>
<feature type="transmembrane region" description="Helical; Name=S5" evidence="1">
    <location>
        <begin position="503"/>
        <end position="524"/>
    </location>
</feature>
<feature type="topological domain" description="Extracellular" evidence="1">
    <location>
        <begin position="525"/>
        <end position="589"/>
    </location>
</feature>
<feature type="transmembrane region" description="Helical; Name=S6" evidence="1">
    <location>
        <begin position="590"/>
        <end position="610"/>
    </location>
</feature>
<feature type="topological domain" description="Cytoplasmic" evidence="1">
    <location>
        <begin position="611"/>
        <end position="759"/>
    </location>
</feature>
<feature type="repeat" description="ANK 1" evidence="1">
    <location>
        <begin position="46"/>
        <end position="75"/>
    </location>
</feature>
<feature type="repeat" description="ANK 2" evidence="1">
    <location>
        <begin position="83"/>
        <end position="109"/>
    </location>
</feature>
<feature type="repeat" description="ANK 4" evidence="1">
    <location>
        <begin position="124"/>
        <end position="146"/>
    </location>
</feature>
<feature type="region of interest" description="Disordered" evidence="3">
    <location>
        <begin position="1"/>
        <end position="30"/>
    </location>
</feature>
<feature type="compositionally biased region" description="Low complexity" evidence="3">
    <location>
        <begin position="15"/>
        <end position="28"/>
    </location>
</feature>
<feature type="binding site" evidence="1">
    <location>
        <position position="155"/>
    </location>
    <ligand>
        <name>Zn(2+)</name>
        <dbReference type="ChEBI" id="CHEBI:29105"/>
    </ligand>
</feature>
<feature type="binding site" evidence="1">
    <location>
        <position position="159"/>
    </location>
    <ligand>
        <name>Zn(2+)</name>
        <dbReference type="ChEBI" id="CHEBI:29105"/>
    </ligand>
</feature>
<feature type="binding site" evidence="1">
    <location>
        <position position="161"/>
    </location>
    <ligand>
        <name>Zn(2+)</name>
        <dbReference type="ChEBI" id="CHEBI:29105"/>
    </ligand>
</feature>
<feature type="binding site" evidence="1">
    <location>
        <position position="164"/>
    </location>
    <ligand>
        <name>Zn(2+)</name>
        <dbReference type="ChEBI" id="CHEBI:29105"/>
    </ligand>
</feature>
<feature type="disulfide bond" evidence="1">
    <location>
        <begin position="537"/>
        <end position="542"/>
    </location>
</feature>
<gene>
    <name type="primary">Trpc1</name>
    <name type="synonym">Trp1</name>
</gene>